<proteinExistence type="inferred from homology"/>
<organism>
    <name type="scientific">Methylorubrum extorquens (strain PA1)</name>
    <name type="common">Methylobacterium extorquens</name>
    <dbReference type="NCBI Taxonomy" id="419610"/>
    <lineage>
        <taxon>Bacteria</taxon>
        <taxon>Pseudomonadati</taxon>
        <taxon>Pseudomonadota</taxon>
        <taxon>Alphaproteobacteria</taxon>
        <taxon>Hyphomicrobiales</taxon>
        <taxon>Methylobacteriaceae</taxon>
        <taxon>Methylorubrum</taxon>
    </lineage>
</organism>
<name>DDL_METEP</name>
<sequence length="307" mass="32801">MSKHVAVLMGGWSSEREISLRSGNACAEALEGEGYRVTRVNVGPDIATVLTELRPDAALNALHGPAGEDGTIQGLLEILKIPYTHSGVLASALAMHKERAKTVMRAAGVSVPEGRVVNRHDAAKSHPLTPPYVVKPIAEGSSMGVIIVRDERSHPPQILASDEWVYGEEVLAETYVAGRELTCAVLGDRALGVTEIKPVSGEWYDFDAKYAGGGSIHVLPADLKLNIYQRVQELALTAHQALGCRGVSRADLRYDDTPGGTGALVVLEVNTQPGMTQTSLVPEIAAHAGQSFGELVRWMVEDASLNR</sequence>
<evidence type="ECO:0000250" key="1"/>
<evidence type="ECO:0000255" key="2">
    <source>
        <dbReference type="HAMAP-Rule" id="MF_00047"/>
    </source>
</evidence>
<accession>A9VWV8</accession>
<protein>
    <recommendedName>
        <fullName evidence="2">D-alanine--D-alanine ligase</fullName>
        <ecNumber evidence="2">6.3.2.4</ecNumber>
    </recommendedName>
    <alternativeName>
        <fullName evidence="2">D-Ala-D-Ala ligase</fullName>
    </alternativeName>
    <alternativeName>
        <fullName evidence="2">D-alanylalanine synthetase</fullName>
    </alternativeName>
</protein>
<gene>
    <name evidence="2" type="primary">ddl</name>
    <name type="ordered locus">Mext_2946</name>
</gene>
<dbReference type="EC" id="6.3.2.4" evidence="2"/>
<dbReference type="EMBL" id="CP000908">
    <property type="protein sequence ID" value="ABY31335.1"/>
    <property type="molecule type" value="Genomic_DNA"/>
</dbReference>
<dbReference type="RefSeq" id="WP_012254276.1">
    <property type="nucleotide sequence ID" value="NC_010172.1"/>
</dbReference>
<dbReference type="SMR" id="A9VWV8"/>
<dbReference type="KEGG" id="mex:Mext_2946"/>
<dbReference type="eggNOG" id="COG1181">
    <property type="taxonomic scope" value="Bacteria"/>
</dbReference>
<dbReference type="HOGENOM" id="CLU_039268_1_1_5"/>
<dbReference type="BioCyc" id="MEXT419610:MEXT_RS14840-MONOMER"/>
<dbReference type="UniPathway" id="UPA00219"/>
<dbReference type="GO" id="GO:0005737">
    <property type="term" value="C:cytoplasm"/>
    <property type="evidence" value="ECO:0007669"/>
    <property type="project" value="UniProtKB-SubCell"/>
</dbReference>
<dbReference type="GO" id="GO:0005524">
    <property type="term" value="F:ATP binding"/>
    <property type="evidence" value="ECO:0007669"/>
    <property type="project" value="UniProtKB-KW"/>
</dbReference>
<dbReference type="GO" id="GO:0008716">
    <property type="term" value="F:D-alanine-D-alanine ligase activity"/>
    <property type="evidence" value="ECO:0007669"/>
    <property type="project" value="UniProtKB-UniRule"/>
</dbReference>
<dbReference type="GO" id="GO:0046872">
    <property type="term" value="F:metal ion binding"/>
    <property type="evidence" value="ECO:0007669"/>
    <property type="project" value="UniProtKB-KW"/>
</dbReference>
<dbReference type="GO" id="GO:0071555">
    <property type="term" value="P:cell wall organization"/>
    <property type="evidence" value="ECO:0007669"/>
    <property type="project" value="UniProtKB-KW"/>
</dbReference>
<dbReference type="GO" id="GO:0009252">
    <property type="term" value="P:peptidoglycan biosynthetic process"/>
    <property type="evidence" value="ECO:0007669"/>
    <property type="project" value="UniProtKB-UniRule"/>
</dbReference>
<dbReference type="GO" id="GO:0008360">
    <property type="term" value="P:regulation of cell shape"/>
    <property type="evidence" value="ECO:0007669"/>
    <property type="project" value="UniProtKB-KW"/>
</dbReference>
<dbReference type="Gene3D" id="3.40.50.20">
    <property type="match status" value="1"/>
</dbReference>
<dbReference type="Gene3D" id="3.30.1490.20">
    <property type="entry name" value="ATP-grasp fold, A domain"/>
    <property type="match status" value="1"/>
</dbReference>
<dbReference type="Gene3D" id="3.30.470.20">
    <property type="entry name" value="ATP-grasp fold, B domain"/>
    <property type="match status" value="1"/>
</dbReference>
<dbReference type="HAMAP" id="MF_00047">
    <property type="entry name" value="Dala_Dala_lig"/>
    <property type="match status" value="1"/>
</dbReference>
<dbReference type="InterPro" id="IPR011761">
    <property type="entry name" value="ATP-grasp"/>
</dbReference>
<dbReference type="InterPro" id="IPR013815">
    <property type="entry name" value="ATP_grasp_subdomain_1"/>
</dbReference>
<dbReference type="InterPro" id="IPR000291">
    <property type="entry name" value="D-Ala_lig_Van_CS"/>
</dbReference>
<dbReference type="InterPro" id="IPR005905">
    <property type="entry name" value="D_ala_D_ala"/>
</dbReference>
<dbReference type="InterPro" id="IPR011095">
    <property type="entry name" value="Dala_Dala_lig_C"/>
</dbReference>
<dbReference type="InterPro" id="IPR011127">
    <property type="entry name" value="Dala_Dala_lig_N"/>
</dbReference>
<dbReference type="InterPro" id="IPR016185">
    <property type="entry name" value="PreATP-grasp_dom_sf"/>
</dbReference>
<dbReference type="NCBIfam" id="TIGR01205">
    <property type="entry name" value="D_ala_D_alaTIGR"/>
    <property type="match status" value="1"/>
</dbReference>
<dbReference type="NCBIfam" id="NF002378">
    <property type="entry name" value="PRK01372.1"/>
    <property type="match status" value="1"/>
</dbReference>
<dbReference type="PANTHER" id="PTHR23132">
    <property type="entry name" value="D-ALANINE--D-ALANINE LIGASE"/>
    <property type="match status" value="1"/>
</dbReference>
<dbReference type="PANTHER" id="PTHR23132:SF23">
    <property type="entry name" value="D-ALANINE--D-ALANINE LIGASE B"/>
    <property type="match status" value="1"/>
</dbReference>
<dbReference type="Pfam" id="PF07478">
    <property type="entry name" value="Dala_Dala_lig_C"/>
    <property type="match status" value="1"/>
</dbReference>
<dbReference type="Pfam" id="PF01820">
    <property type="entry name" value="Dala_Dala_lig_N"/>
    <property type="match status" value="1"/>
</dbReference>
<dbReference type="PIRSF" id="PIRSF039102">
    <property type="entry name" value="Ddl/VanB"/>
    <property type="match status" value="1"/>
</dbReference>
<dbReference type="SUPFAM" id="SSF56059">
    <property type="entry name" value="Glutathione synthetase ATP-binding domain-like"/>
    <property type="match status" value="1"/>
</dbReference>
<dbReference type="SUPFAM" id="SSF52440">
    <property type="entry name" value="PreATP-grasp domain"/>
    <property type="match status" value="1"/>
</dbReference>
<dbReference type="PROSITE" id="PS50975">
    <property type="entry name" value="ATP_GRASP"/>
    <property type="match status" value="1"/>
</dbReference>
<dbReference type="PROSITE" id="PS00843">
    <property type="entry name" value="DALA_DALA_LIGASE_1"/>
    <property type="match status" value="1"/>
</dbReference>
<dbReference type="PROSITE" id="PS00844">
    <property type="entry name" value="DALA_DALA_LIGASE_2"/>
    <property type="match status" value="1"/>
</dbReference>
<feature type="chain" id="PRO_1000091193" description="D-alanine--D-alanine ligase">
    <location>
        <begin position="1"/>
        <end position="307"/>
    </location>
</feature>
<feature type="domain" description="ATP-grasp" evidence="2">
    <location>
        <begin position="101"/>
        <end position="301"/>
    </location>
</feature>
<feature type="binding site" evidence="2">
    <location>
        <begin position="127"/>
        <end position="182"/>
    </location>
    <ligand>
        <name>ATP</name>
        <dbReference type="ChEBI" id="CHEBI:30616"/>
    </ligand>
</feature>
<feature type="binding site" evidence="2">
    <location>
        <position position="251"/>
    </location>
    <ligand>
        <name>Mg(2+)</name>
        <dbReference type="ChEBI" id="CHEBI:18420"/>
        <label>1</label>
    </ligand>
</feature>
<feature type="binding site" evidence="2">
    <location>
        <position position="268"/>
    </location>
    <ligand>
        <name>Mg(2+)</name>
        <dbReference type="ChEBI" id="CHEBI:18420"/>
        <label>1</label>
    </ligand>
</feature>
<feature type="binding site" evidence="2">
    <location>
        <position position="268"/>
    </location>
    <ligand>
        <name>Mg(2+)</name>
        <dbReference type="ChEBI" id="CHEBI:18420"/>
        <label>2</label>
    </ligand>
</feature>
<feature type="binding site" evidence="2">
    <location>
        <position position="270"/>
    </location>
    <ligand>
        <name>Mg(2+)</name>
        <dbReference type="ChEBI" id="CHEBI:18420"/>
        <label>2</label>
    </ligand>
</feature>
<comment type="function">
    <text evidence="2">Cell wall formation.</text>
</comment>
<comment type="catalytic activity">
    <reaction evidence="2">
        <text>2 D-alanine + ATP = D-alanyl-D-alanine + ADP + phosphate + H(+)</text>
        <dbReference type="Rhea" id="RHEA:11224"/>
        <dbReference type="ChEBI" id="CHEBI:15378"/>
        <dbReference type="ChEBI" id="CHEBI:30616"/>
        <dbReference type="ChEBI" id="CHEBI:43474"/>
        <dbReference type="ChEBI" id="CHEBI:57416"/>
        <dbReference type="ChEBI" id="CHEBI:57822"/>
        <dbReference type="ChEBI" id="CHEBI:456216"/>
        <dbReference type="EC" id="6.3.2.4"/>
    </reaction>
</comment>
<comment type="cofactor">
    <cofactor evidence="1">
        <name>Mg(2+)</name>
        <dbReference type="ChEBI" id="CHEBI:18420"/>
    </cofactor>
    <cofactor evidence="1">
        <name>Mn(2+)</name>
        <dbReference type="ChEBI" id="CHEBI:29035"/>
    </cofactor>
    <text evidence="1">Binds 2 magnesium or manganese ions per subunit.</text>
</comment>
<comment type="pathway">
    <text evidence="2">Cell wall biogenesis; peptidoglycan biosynthesis.</text>
</comment>
<comment type="subcellular location">
    <subcellularLocation>
        <location evidence="2">Cytoplasm</location>
    </subcellularLocation>
</comment>
<comment type="similarity">
    <text evidence="2">Belongs to the D-alanine--D-alanine ligase family.</text>
</comment>
<keyword id="KW-0067">ATP-binding</keyword>
<keyword id="KW-0133">Cell shape</keyword>
<keyword id="KW-0961">Cell wall biogenesis/degradation</keyword>
<keyword id="KW-0963">Cytoplasm</keyword>
<keyword id="KW-0436">Ligase</keyword>
<keyword id="KW-0460">Magnesium</keyword>
<keyword id="KW-0464">Manganese</keyword>
<keyword id="KW-0479">Metal-binding</keyword>
<keyword id="KW-0547">Nucleotide-binding</keyword>
<keyword id="KW-0573">Peptidoglycan synthesis</keyword>
<reference key="1">
    <citation type="submission" date="2007-12" db="EMBL/GenBank/DDBJ databases">
        <title>Complete sequence of Methylobacterium extorquens PA1.</title>
        <authorList>
            <consortium name="US DOE Joint Genome Institute"/>
            <person name="Copeland A."/>
            <person name="Lucas S."/>
            <person name="Lapidus A."/>
            <person name="Barry K."/>
            <person name="Glavina del Rio T."/>
            <person name="Dalin E."/>
            <person name="Tice H."/>
            <person name="Pitluck S."/>
            <person name="Saunders E."/>
            <person name="Brettin T."/>
            <person name="Bruce D."/>
            <person name="Detter J.C."/>
            <person name="Han C."/>
            <person name="Schmutz J."/>
            <person name="Larimer F."/>
            <person name="Land M."/>
            <person name="Hauser L."/>
            <person name="Kyrpides N."/>
            <person name="Kim E."/>
            <person name="Marx C."/>
            <person name="Richardson P."/>
        </authorList>
    </citation>
    <scope>NUCLEOTIDE SEQUENCE [LARGE SCALE GENOMIC DNA]</scope>
    <source>
        <strain>PA1</strain>
    </source>
</reference>